<gene>
    <name evidence="1" type="primary">ispG</name>
    <name type="ordered locus">Bsph_3646</name>
</gene>
<sequence length="371" mass="40015">MSEICHRSNTRPVRVGNLTIGGSNELFIQSMCTTKTHDVEATVAEILRLEEAGCQIVRVAVPDERAADAIAEIKKRIHIPLVADIHFDYRLALKAIENGIDKVRINPGNIGRKEKVEAVVNAAKAKGIPIRIGVNAGSLERHILEKYGYPTADGMVESALHHIKILEDLDFHDIIVSMKASDVNLAIEAYEKAAKAFNYPLHLGITESGTLFAGTVKSAAGLGAILSKGIGNTLRISLSADPVEEIKVARELLKSFGLASNMATLISCPTCGRIEIDLISIANEVEEYISKLNVPLKVAVLGCAVNGPGEAREADIGIAGARGEGLLFMKGKTVRKVPEETMVEELKKEIDKLAAEMEEKRAAEEVQKANA</sequence>
<evidence type="ECO:0000255" key="1">
    <source>
        <dbReference type="HAMAP-Rule" id="MF_00159"/>
    </source>
</evidence>
<accession>B1HSS4</accession>
<comment type="function">
    <text evidence="1">Converts 2C-methyl-D-erythritol 2,4-cyclodiphosphate (ME-2,4cPP) into 1-hydroxy-2-methyl-2-(E)-butenyl 4-diphosphate.</text>
</comment>
<comment type="catalytic activity">
    <reaction evidence="1">
        <text>(2E)-4-hydroxy-3-methylbut-2-enyl diphosphate + oxidized [flavodoxin] + H2O + 2 H(+) = 2-C-methyl-D-erythritol 2,4-cyclic diphosphate + reduced [flavodoxin]</text>
        <dbReference type="Rhea" id="RHEA:43604"/>
        <dbReference type="Rhea" id="RHEA-COMP:10622"/>
        <dbReference type="Rhea" id="RHEA-COMP:10623"/>
        <dbReference type="ChEBI" id="CHEBI:15377"/>
        <dbReference type="ChEBI" id="CHEBI:15378"/>
        <dbReference type="ChEBI" id="CHEBI:57618"/>
        <dbReference type="ChEBI" id="CHEBI:58210"/>
        <dbReference type="ChEBI" id="CHEBI:58483"/>
        <dbReference type="ChEBI" id="CHEBI:128753"/>
        <dbReference type="EC" id="1.17.7.3"/>
    </reaction>
</comment>
<comment type="cofactor">
    <cofactor evidence="1">
        <name>[4Fe-4S] cluster</name>
        <dbReference type="ChEBI" id="CHEBI:49883"/>
    </cofactor>
    <text evidence="1">Binds 1 [4Fe-4S] cluster.</text>
</comment>
<comment type="pathway">
    <text evidence="1">Isoprenoid biosynthesis; isopentenyl diphosphate biosynthesis via DXP pathway; isopentenyl diphosphate from 1-deoxy-D-xylulose 5-phosphate: step 5/6.</text>
</comment>
<comment type="similarity">
    <text evidence="1">Belongs to the IspG family.</text>
</comment>
<name>ISPG_LYSSC</name>
<reference key="1">
    <citation type="journal article" date="2008" name="J. Bacteriol.">
        <title>Complete genome sequence of the mosquitocidal bacterium Bacillus sphaericus C3-41 and comparison with those of closely related Bacillus species.</title>
        <authorList>
            <person name="Hu X."/>
            <person name="Fan W."/>
            <person name="Han B."/>
            <person name="Liu H."/>
            <person name="Zheng D."/>
            <person name="Li Q."/>
            <person name="Dong W."/>
            <person name="Yan J."/>
            <person name="Gao M."/>
            <person name="Berry C."/>
            <person name="Yuan Z."/>
        </authorList>
    </citation>
    <scope>NUCLEOTIDE SEQUENCE [LARGE SCALE GENOMIC DNA]</scope>
    <source>
        <strain>C3-41</strain>
    </source>
</reference>
<feature type="chain" id="PRO_1000097168" description="4-hydroxy-3-methylbut-2-en-1-yl diphosphate synthase (flavodoxin)">
    <location>
        <begin position="1"/>
        <end position="371"/>
    </location>
</feature>
<feature type="binding site" evidence="1">
    <location>
        <position position="268"/>
    </location>
    <ligand>
        <name>[4Fe-4S] cluster</name>
        <dbReference type="ChEBI" id="CHEBI:49883"/>
    </ligand>
</feature>
<feature type="binding site" evidence="1">
    <location>
        <position position="271"/>
    </location>
    <ligand>
        <name>[4Fe-4S] cluster</name>
        <dbReference type="ChEBI" id="CHEBI:49883"/>
    </ligand>
</feature>
<feature type="binding site" evidence="1">
    <location>
        <position position="303"/>
    </location>
    <ligand>
        <name>[4Fe-4S] cluster</name>
        <dbReference type="ChEBI" id="CHEBI:49883"/>
    </ligand>
</feature>
<feature type="binding site" evidence="1">
    <location>
        <position position="310"/>
    </location>
    <ligand>
        <name>[4Fe-4S] cluster</name>
        <dbReference type="ChEBI" id="CHEBI:49883"/>
    </ligand>
</feature>
<keyword id="KW-0004">4Fe-4S</keyword>
<keyword id="KW-0408">Iron</keyword>
<keyword id="KW-0411">Iron-sulfur</keyword>
<keyword id="KW-0414">Isoprene biosynthesis</keyword>
<keyword id="KW-0479">Metal-binding</keyword>
<keyword id="KW-0560">Oxidoreductase</keyword>
<organism>
    <name type="scientific">Lysinibacillus sphaericus (strain C3-41)</name>
    <dbReference type="NCBI Taxonomy" id="444177"/>
    <lineage>
        <taxon>Bacteria</taxon>
        <taxon>Bacillati</taxon>
        <taxon>Bacillota</taxon>
        <taxon>Bacilli</taxon>
        <taxon>Bacillales</taxon>
        <taxon>Bacillaceae</taxon>
        <taxon>Lysinibacillus</taxon>
    </lineage>
</organism>
<protein>
    <recommendedName>
        <fullName evidence="1">4-hydroxy-3-methylbut-2-en-1-yl diphosphate synthase (flavodoxin)</fullName>
        <ecNumber evidence="1">1.17.7.3</ecNumber>
    </recommendedName>
    <alternativeName>
        <fullName evidence="1">1-hydroxy-2-methyl-2-(E)-butenyl 4-diphosphate synthase</fullName>
    </alternativeName>
</protein>
<proteinExistence type="inferred from homology"/>
<dbReference type="EC" id="1.17.7.3" evidence="1"/>
<dbReference type="EMBL" id="CP000817">
    <property type="protein sequence ID" value="ACA41132.1"/>
    <property type="molecule type" value="Genomic_DNA"/>
</dbReference>
<dbReference type="RefSeq" id="WP_012295189.1">
    <property type="nucleotide sequence ID" value="NC_010382.1"/>
</dbReference>
<dbReference type="SMR" id="B1HSS4"/>
<dbReference type="EnsemblBacteria" id="ACA41132">
    <property type="protein sequence ID" value="ACA41132"/>
    <property type="gene ID" value="Bsph_3646"/>
</dbReference>
<dbReference type="KEGG" id="lsp:Bsph_3646"/>
<dbReference type="HOGENOM" id="CLU_042258_0_0_9"/>
<dbReference type="UniPathway" id="UPA00056">
    <property type="reaction ID" value="UER00096"/>
</dbReference>
<dbReference type="Proteomes" id="UP000002164">
    <property type="component" value="Chromosome"/>
</dbReference>
<dbReference type="GO" id="GO:0051539">
    <property type="term" value="F:4 iron, 4 sulfur cluster binding"/>
    <property type="evidence" value="ECO:0007669"/>
    <property type="project" value="UniProtKB-UniRule"/>
</dbReference>
<dbReference type="GO" id="GO:0046429">
    <property type="term" value="F:4-hydroxy-3-methylbut-2-en-1-yl diphosphate synthase activity (ferredoxin)"/>
    <property type="evidence" value="ECO:0007669"/>
    <property type="project" value="UniProtKB-UniRule"/>
</dbReference>
<dbReference type="GO" id="GO:0141197">
    <property type="term" value="F:4-hydroxy-3-methylbut-2-enyl-diphosphate synthase activity (flavodoxin)"/>
    <property type="evidence" value="ECO:0007669"/>
    <property type="project" value="UniProtKB-EC"/>
</dbReference>
<dbReference type="GO" id="GO:0005506">
    <property type="term" value="F:iron ion binding"/>
    <property type="evidence" value="ECO:0007669"/>
    <property type="project" value="InterPro"/>
</dbReference>
<dbReference type="GO" id="GO:0019288">
    <property type="term" value="P:isopentenyl diphosphate biosynthetic process, methylerythritol 4-phosphate pathway"/>
    <property type="evidence" value="ECO:0007669"/>
    <property type="project" value="UniProtKB-UniRule"/>
</dbReference>
<dbReference type="GO" id="GO:0016114">
    <property type="term" value="P:terpenoid biosynthetic process"/>
    <property type="evidence" value="ECO:0007669"/>
    <property type="project" value="InterPro"/>
</dbReference>
<dbReference type="FunFam" id="3.20.20.20:FF:000001">
    <property type="entry name" value="4-hydroxy-3-methylbut-2-en-1-yl diphosphate synthase (flavodoxin)"/>
    <property type="match status" value="1"/>
</dbReference>
<dbReference type="FunFam" id="3.30.413.10:FF:000005">
    <property type="entry name" value="4-hydroxy-3-methylbut-2-en-1-yl diphosphate synthase (flavodoxin)"/>
    <property type="match status" value="1"/>
</dbReference>
<dbReference type="Gene3D" id="3.20.20.20">
    <property type="entry name" value="Dihydropteroate synthase-like"/>
    <property type="match status" value="1"/>
</dbReference>
<dbReference type="Gene3D" id="3.30.413.10">
    <property type="entry name" value="Sulfite Reductase Hemoprotein, domain 1"/>
    <property type="match status" value="1"/>
</dbReference>
<dbReference type="HAMAP" id="MF_00159">
    <property type="entry name" value="IspG"/>
    <property type="match status" value="1"/>
</dbReference>
<dbReference type="InterPro" id="IPR011005">
    <property type="entry name" value="Dihydropteroate_synth-like_sf"/>
</dbReference>
<dbReference type="InterPro" id="IPR016425">
    <property type="entry name" value="IspG_bac"/>
</dbReference>
<dbReference type="InterPro" id="IPR004588">
    <property type="entry name" value="IspG_bac-typ"/>
</dbReference>
<dbReference type="InterPro" id="IPR045854">
    <property type="entry name" value="NO2/SO3_Rdtase_4Fe4S_sf"/>
</dbReference>
<dbReference type="NCBIfam" id="TIGR00612">
    <property type="entry name" value="ispG_gcpE"/>
    <property type="match status" value="1"/>
</dbReference>
<dbReference type="NCBIfam" id="NF001540">
    <property type="entry name" value="PRK00366.1"/>
    <property type="match status" value="1"/>
</dbReference>
<dbReference type="PANTHER" id="PTHR30454">
    <property type="entry name" value="4-HYDROXY-3-METHYLBUT-2-EN-1-YL DIPHOSPHATE SYNTHASE"/>
    <property type="match status" value="1"/>
</dbReference>
<dbReference type="PANTHER" id="PTHR30454:SF0">
    <property type="entry name" value="4-HYDROXY-3-METHYLBUT-2-EN-1-YL DIPHOSPHATE SYNTHASE (FERREDOXIN), CHLOROPLASTIC"/>
    <property type="match status" value="1"/>
</dbReference>
<dbReference type="Pfam" id="PF04551">
    <property type="entry name" value="GcpE"/>
    <property type="match status" value="1"/>
</dbReference>
<dbReference type="PIRSF" id="PIRSF004640">
    <property type="entry name" value="IspG"/>
    <property type="match status" value="1"/>
</dbReference>
<dbReference type="SUPFAM" id="SSF51717">
    <property type="entry name" value="Dihydropteroate synthetase-like"/>
    <property type="match status" value="1"/>
</dbReference>
<dbReference type="SUPFAM" id="SSF56014">
    <property type="entry name" value="Nitrite and sulphite reductase 4Fe-4S domain-like"/>
    <property type="match status" value="1"/>
</dbReference>